<evidence type="ECO:0000255" key="1">
    <source>
        <dbReference type="HAMAP-Rule" id="MF_01315"/>
    </source>
</evidence>
<evidence type="ECO:0000256" key="2">
    <source>
        <dbReference type="SAM" id="MobiDB-lite"/>
    </source>
</evidence>
<evidence type="ECO:0000305" key="3"/>
<accession>A5VQY4</accession>
<dbReference type="EMBL" id="CP000708">
    <property type="protein sequence ID" value="ABQ61688.1"/>
    <property type="molecule type" value="Genomic_DNA"/>
</dbReference>
<dbReference type="RefSeq" id="WP_002964340.1">
    <property type="nucleotide sequence ID" value="NC_009505.1"/>
</dbReference>
<dbReference type="SMR" id="A5VQY4"/>
<dbReference type="GeneID" id="97533546"/>
<dbReference type="KEGG" id="bov:BOV_1174"/>
<dbReference type="HOGENOM" id="CLU_103849_1_2_5"/>
<dbReference type="PhylomeDB" id="A5VQY4"/>
<dbReference type="Proteomes" id="UP000006383">
    <property type="component" value="Chromosome I"/>
</dbReference>
<dbReference type="GO" id="GO:0005829">
    <property type="term" value="C:cytosol"/>
    <property type="evidence" value="ECO:0007669"/>
    <property type="project" value="TreeGrafter"/>
</dbReference>
<dbReference type="GO" id="GO:0015935">
    <property type="term" value="C:small ribosomal subunit"/>
    <property type="evidence" value="ECO:0007669"/>
    <property type="project" value="TreeGrafter"/>
</dbReference>
<dbReference type="GO" id="GO:0019843">
    <property type="term" value="F:rRNA binding"/>
    <property type="evidence" value="ECO:0007669"/>
    <property type="project" value="UniProtKB-UniRule"/>
</dbReference>
<dbReference type="GO" id="GO:0003735">
    <property type="term" value="F:structural constituent of ribosome"/>
    <property type="evidence" value="ECO:0007669"/>
    <property type="project" value="InterPro"/>
</dbReference>
<dbReference type="GO" id="GO:0000049">
    <property type="term" value="F:tRNA binding"/>
    <property type="evidence" value="ECO:0007669"/>
    <property type="project" value="UniProtKB-UniRule"/>
</dbReference>
<dbReference type="GO" id="GO:0006412">
    <property type="term" value="P:translation"/>
    <property type="evidence" value="ECO:0007669"/>
    <property type="project" value="UniProtKB-UniRule"/>
</dbReference>
<dbReference type="FunFam" id="1.10.8.50:FF:000001">
    <property type="entry name" value="30S ribosomal protein S13"/>
    <property type="match status" value="1"/>
</dbReference>
<dbReference type="FunFam" id="4.10.910.10:FF:000001">
    <property type="entry name" value="30S ribosomal protein S13"/>
    <property type="match status" value="1"/>
</dbReference>
<dbReference type="Gene3D" id="1.10.8.50">
    <property type="match status" value="1"/>
</dbReference>
<dbReference type="Gene3D" id="4.10.910.10">
    <property type="entry name" value="30s ribosomal protein s13, domain 2"/>
    <property type="match status" value="1"/>
</dbReference>
<dbReference type="HAMAP" id="MF_01315">
    <property type="entry name" value="Ribosomal_uS13"/>
    <property type="match status" value="1"/>
</dbReference>
<dbReference type="InterPro" id="IPR027437">
    <property type="entry name" value="Rbsml_uS13_C"/>
</dbReference>
<dbReference type="InterPro" id="IPR001892">
    <property type="entry name" value="Ribosomal_uS13"/>
</dbReference>
<dbReference type="InterPro" id="IPR010979">
    <property type="entry name" value="Ribosomal_uS13-like_H2TH"/>
</dbReference>
<dbReference type="InterPro" id="IPR019980">
    <property type="entry name" value="Ribosomal_uS13_bac-type"/>
</dbReference>
<dbReference type="InterPro" id="IPR018269">
    <property type="entry name" value="Ribosomal_uS13_CS"/>
</dbReference>
<dbReference type="NCBIfam" id="TIGR03631">
    <property type="entry name" value="uS13_bact"/>
    <property type="match status" value="1"/>
</dbReference>
<dbReference type="PANTHER" id="PTHR10871">
    <property type="entry name" value="30S RIBOSOMAL PROTEIN S13/40S RIBOSOMAL PROTEIN S18"/>
    <property type="match status" value="1"/>
</dbReference>
<dbReference type="PANTHER" id="PTHR10871:SF1">
    <property type="entry name" value="SMALL RIBOSOMAL SUBUNIT PROTEIN US13M"/>
    <property type="match status" value="1"/>
</dbReference>
<dbReference type="Pfam" id="PF00416">
    <property type="entry name" value="Ribosomal_S13"/>
    <property type="match status" value="1"/>
</dbReference>
<dbReference type="PIRSF" id="PIRSF002134">
    <property type="entry name" value="Ribosomal_S13"/>
    <property type="match status" value="1"/>
</dbReference>
<dbReference type="SUPFAM" id="SSF46946">
    <property type="entry name" value="S13-like H2TH domain"/>
    <property type="match status" value="1"/>
</dbReference>
<dbReference type="PROSITE" id="PS00646">
    <property type="entry name" value="RIBOSOMAL_S13_1"/>
    <property type="match status" value="1"/>
</dbReference>
<dbReference type="PROSITE" id="PS50159">
    <property type="entry name" value="RIBOSOMAL_S13_2"/>
    <property type="match status" value="1"/>
</dbReference>
<organism>
    <name type="scientific">Brucella ovis (strain ATCC 25840 / 63/290 / NCTC 10512)</name>
    <dbReference type="NCBI Taxonomy" id="444178"/>
    <lineage>
        <taxon>Bacteria</taxon>
        <taxon>Pseudomonadati</taxon>
        <taxon>Pseudomonadota</taxon>
        <taxon>Alphaproteobacteria</taxon>
        <taxon>Hyphomicrobiales</taxon>
        <taxon>Brucellaceae</taxon>
        <taxon>Brucella/Ochrobactrum group</taxon>
        <taxon>Brucella</taxon>
    </lineage>
</organism>
<gene>
    <name evidence="1" type="primary">rpsM</name>
    <name type="ordered locus">BOV_1174</name>
</gene>
<proteinExistence type="inferred from homology"/>
<name>RS13_BRUO2</name>
<feature type="chain" id="PRO_0000306573" description="Small ribosomal subunit protein uS13">
    <location>
        <begin position="1"/>
        <end position="122"/>
    </location>
</feature>
<feature type="region of interest" description="Disordered" evidence="2">
    <location>
        <begin position="97"/>
        <end position="122"/>
    </location>
</feature>
<reference key="1">
    <citation type="journal article" date="2009" name="PLoS ONE">
        <title>Genome degradation in Brucella ovis corresponds with narrowing of its host range and tissue tropism.</title>
        <authorList>
            <person name="Tsolis R.M."/>
            <person name="Seshadri R."/>
            <person name="Santos R.L."/>
            <person name="Sangari F.J."/>
            <person name="Lobo J.M."/>
            <person name="de Jong M.F."/>
            <person name="Ren Q."/>
            <person name="Myers G."/>
            <person name="Brinkac L.M."/>
            <person name="Nelson W.C."/>
            <person name="Deboy R.T."/>
            <person name="Angiuoli S."/>
            <person name="Khouri H."/>
            <person name="Dimitrov G."/>
            <person name="Robinson J.R."/>
            <person name="Mulligan S."/>
            <person name="Walker R.L."/>
            <person name="Elzer P.E."/>
            <person name="Hassan K.A."/>
            <person name="Paulsen I.T."/>
        </authorList>
    </citation>
    <scope>NUCLEOTIDE SEQUENCE [LARGE SCALE GENOMIC DNA]</scope>
    <source>
        <strain>ATCC 25840 / 63/290 / NCTC 10512</strain>
    </source>
</reference>
<sequence length="122" mass="13769">MARIAGVNIPTNKRVNIALQYIHGIGPKFAREIVTKVGIADDRRVNQLSDAEVLQIREAIDADYQVEGDLRREVSMNIKRLMDLGCYRGLRHRRSLPVRGQRTHTNARTRKGPAKAIAGKKK</sequence>
<comment type="function">
    <text evidence="1">Located at the top of the head of the 30S subunit, it contacts several helices of the 16S rRNA. In the 70S ribosome it contacts the 23S rRNA (bridge B1a) and protein L5 of the 50S subunit (bridge B1b), connecting the 2 subunits; these bridges are implicated in subunit movement. Contacts the tRNAs in the A and P-sites.</text>
</comment>
<comment type="subunit">
    <text evidence="1">Part of the 30S ribosomal subunit. Forms a loose heterodimer with protein S19. Forms two bridges to the 50S subunit in the 70S ribosome.</text>
</comment>
<comment type="similarity">
    <text evidence="1">Belongs to the universal ribosomal protein uS13 family.</text>
</comment>
<protein>
    <recommendedName>
        <fullName evidence="1">Small ribosomal subunit protein uS13</fullName>
    </recommendedName>
    <alternativeName>
        <fullName evidence="3">30S ribosomal protein S13</fullName>
    </alternativeName>
</protein>
<keyword id="KW-0687">Ribonucleoprotein</keyword>
<keyword id="KW-0689">Ribosomal protein</keyword>
<keyword id="KW-0694">RNA-binding</keyword>
<keyword id="KW-0699">rRNA-binding</keyword>
<keyword id="KW-0820">tRNA-binding</keyword>